<evidence type="ECO:0000255" key="1">
    <source>
        <dbReference type="HAMAP-Rule" id="MF_00083"/>
    </source>
</evidence>
<evidence type="ECO:0000269" key="2">
    <source>
    </source>
</evidence>
<evidence type="ECO:0000269" key="3">
    <source>
    </source>
</evidence>
<evidence type="ECO:0000305" key="4">
    <source>
    </source>
</evidence>
<evidence type="ECO:0000305" key="5">
    <source>
    </source>
</evidence>
<evidence type="ECO:0000312" key="6">
    <source>
        <dbReference type="EMBL" id="ACY88619.1"/>
    </source>
</evidence>
<organism>
    <name type="scientific">Salmonella typhimurium (strain 14028s / SGSC 2262)</name>
    <dbReference type="NCBI Taxonomy" id="588858"/>
    <lineage>
        <taxon>Bacteria</taxon>
        <taxon>Pseudomonadati</taxon>
        <taxon>Pseudomonadota</taxon>
        <taxon>Gammaproteobacteria</taxon>
        <taxon>Enterobacterales</taxon>
        <taxon>Enterobacteriaceae</taxon>
        <taxon>Salmonella</taxon>
    </lineage>
</organism>
<sequence>MAIKLIVGLANPGAEYAATRHNAGAWYVDLLAERLRAPLREEPKFFGYTSRITLEGEDVRLLVPTTFMNLSGKAVGAMASFYRIQPDEILVAHDELDLPPGVAKFKLGGGHGGHNGLKDIISKLGNNPNFHRLRVGIGHPGDKNKVVGFVLGKPPVSEQKLIDEAIDEAARCTELWFKEGLAKATSRLHTFKAQ</sequence>
<gene>
    <name evidence="1 6" type="primary">pth</name>
    <name evidence="6" type="ordered locus">STM14_2156</name>
</gene>
<name>PTH_SALT1</name>
<comment type="function">
    <text evidence="1">Hydrolyzes ribosome-free peptidyl-tRNAs (with 1 or more amino acids incorporated), which drop off the ribosome during protein synthesis, or as a result of ribosome stalling.</text>
</comment>
<comment type="function">
    <text evidence="1">Catalyzes the release of premature peptidyl moieties from peptidyl-tRNA molecules trapped in stalled 50S ribosomal subunits, and thus maintains levels of free tRNAs and 50S ribosomes.</text>
</comment>
<comment type="function">
    <text evidence="2 3">Expression in lag phase counteracts expression of tRNA-acetylating toxin TacT, deacetylates bulk tRNA modified by TacT in vitro.</text>
</comment>
<comment type="catalytic activity">
    <reaction evidence="1">
        <text>an N-acyl-L-alpha-aminoacyl-tRNA + H2O = an N-acyl-L-amino acid + a tRNA + H(+)</text>
        <dbReference type="Rhea" id="RHEA:54448"/>
        <dbReference type="Rhea" id="RHEA-COMP:10123"/>
        <dbReference type="Rhea" id="RHEA-COMP:13883"/>
        <dbReference type="ChEBI" id="CHEBI:15377"/>
        <dbReference type="ChEBI" id="CHEBI:15378"/>
        <dbReference type="ChEBI" id="CHEBI:59874"/>
        <dbReference type="ChEBI" id="CHEBI:78442"/>
        <dbReference type="ChEBI" id="CHEBI:138191"/>
        <dbReference type="EC" id="3.1.1.29"/>
    </reaction>
</comment>
<comment type="catalytic activity">
    <reaction evidence="4 5">
        <text>N-acetylglycyl-tRNA(Gly) + H2O = N-acetylglycine + tRNA(Gly) + H(+)</text>
        <dbReference type="Rhea" id="RHEA:81979"/>
        <dbReference type="Rhea" id="RHEA-COMP:9664"/>
        <dbReference type="Rhea" id="RHEA-COMP:19766"/>
        <dbReference type="ChEBI" id="CHEBI:15377"/>
        <dbReference type="ChEBI" id="CHEBI:15378"/>
        <dbReference type="ChEBI" id="CHEBI:61887"/>
        <dbReference type="ChEBI" id="CHEBI:78442"/>
        <dbReference type="ChEBI" id="CHEBI:232036"/>
    </reaction>
</comment>
<comment type="subunit">
    <text evidence="1">Monomer.</text>
</comment>
<comment type="subcellular location">
    <subcellularLocation>
        <location evidence="1">Cytoplasm</location>
    </subcellularLocation>
</comment>
<comment type="similarity">
    <text evidence="1">Belongs to the PTH family.</text>
</comment>
<protein>
    <recommendedName>
        <fullName evidence="1">Peptidyl-tRNA hydrolase</fullName>
        <shortName evidence="1">Pth</shortName>
        <ecNumber evidence="1">3.1.1.29</ecNumber>
    </recommendedName>
</protein>
<accession>A0A0F6B281</accession>
<keyword id="KW-0963">Cytoplasm</keyword>
<keyword id="KW-0378">Hydrolase</keyword>
<keyword id="KW-0694">RNA-binding</keyword>
<keyword id="KW-0820">tRNA-binding</keyword>
<feature type="chain" id="PRO_0000461692" description="Peptidyl-tRNA hydrolase">
    <location>
        <begin position="1"/>
        <end position="194"/>
    </location>
</feature>
<feature type="active site" description="Proton acceptor" evidence="1">
    <location>
        <position position="21"/>
    </location>
</feature>
<feature type="binding site" evidence="1">
    <location>
        <position position="16"/>
    </location>
    <ligand>
        <name>tRNA</name>
        <dbReference type="ChEBI" id="CHEBI:17843"/>
    </ligand>
</feature>
<feature type="binding site" evidence="1">
    <location>
        <position position="67"/>
    </location>
    <ligand>
        <name>tRNA</name>
        <dbReference type="ChEBI" id="CHEBI:17843"/>
    </ligand>
</feature>
<feature type="binding site" evidence="1">
    <location>
        <position position="69"/>
    </location>
    <ligand>
        <name>tRNA</name>
        <dbReference type="ChEBI" id="CHEBI:17843"/>
    </ligand>
</feature>
<feature type="binding site" evidence="1">
    <location>
        <position position="115"/>
    </location>
    <ligand>
        <name>tRNA</name>
        <dbReference type="ChEBI" id="CHEBI:17843"/>
    </ligand>
</feature>
<feature type="site" description="Discriminates between blocked and unblocked aminoacyl-tRNA" evidence="1">
    <location>
        <position position="11"/>
    </location>
</feature>
<feature type="site" description="Stabilizes the basic form of H active site to accept a proton" evidence="1">
    <location>
        <position position="94"/>
    </location>
</feature>
<dbReference type="EC" id="3.1.1.29" evidence="1"/>
<dbReference type="EMBL" id="CP001363">
    <property type="protein sequence ID" value="ACY88619.1"/>
    <property type="molecule type" value="Genomic_DNA"/>
</dbReference>
<dbReference type="RefSeq" id="WP_000985595.1">
    <property type="nucleotide sequence ID" value="NZ_CP043402.1"/>
</dbReference>
<dbReference type="SMR" id="A0A0F6B281"/>
<dbReference type="KEGG" id="seo:STM14_2156"/>
<dbReference type="PATRIC" id="fig|588858.6.peg.2027"/>
<dbReference type="HOGENOM" id="CLU_062456_3_1_6"/>
<dbReference type="BRENDA" id="3.1.1.29">
    <property type="organism ID" value="5542"/>
</dbReference>
<dbReference type="EvolutionaryTrace" id="A0A0F6B281"/>
<dbReference type="Proteomes" id="UP000002695">
    <property type="component" value="Chromosome"/>
</dbReference>
<dbReference type="GO" id="GO:0005737">
    <property type="term" value="C:cytoplasm"/>
    <property type="evidence" value="ECO:0007669"/>
    <property type="project" value="UniProtKB-SubCell"/>
</dbReference>
<dbReference type="GO" id="GO:0004045">
    <property type="term" value="F:peptidyl-tRNA hydrolase activity"/>
    <property type="evidence" value="ECO:0007669"/>
    <property type="project" value="UniProtKB-UniRule"/>
</dbReference>
<dbReference type="GO" id="GO:0000049">
    <property type="term" value="F:tRNA binding"/>
    <property type="evidence" value="ECO:0007669"/>
    <property type="project" value="UniProtKB-UniRule"/>
</dbReference>
<dbReference type="GO" id="GO:0006515">
    <property type="term" value="P:protein quality control for misfolded or incompletely synthesized proteins"/>
    <property type="evidence" value="ECO:0007669"/>
    <property type="project" value="UniProtKB-UniRule"/>
</dbReference>
<dbReference type="GO" id="GO:0072344">
    <property type="term" value="P:rescue of stalled ribosome"/>
    <property type="evidence" value="ECO:0007669"/>
    <property type="project" value="UniProtKB-UniRule"/>
</dbReference>
<dbReference type="CDD" id="cd00462">
    <property type="entry name" value="PTH"/>
    <property type="match status" value="1"/>
</dbReference>
<dbReference type="FunFam" id="3.40.50.1470:FF:000001">
    <property type="entry name" value="Peptidyl-tRNA hydrolase"/>
    <property type="match status" value="1"/>
</dbReference>
<dbReference type="Gene3D" id="3.40.50.1470">
    <property type="entry name" value="Peptidyl-tRNA hydrolase"/>
    <property type="match status" value="1"/>
</dbReference>
<dbReference type="HAMAP" id="MF_00083">
    <property type="entry name" value="Pept_tRNA_hydro_bact"/>
    <property type="match status" value="1"/>
</dbReference>
<dbReference type="InterPro" id="IPR001328">
    <property type="entry name" value="Pept_tRNA_hydro"/>
</dbReference>
<dbReference type="InterPro" id="IPR018171">
    <property type="entry name" value="Pept_tRNA_hydro_CS"/>
</dbReference>
<dbReference type="InterPro" id="IPR036416">
    <property type="entry name" value="Pept_tRNA_hydro_sf"/>
</dbReference>
<dbReference type="NCBIfam" id="TIGR00447">
    <property type="entry name" value="pth"/>
    <property type="match status" value="1"/>
</dbReference>
<dbReference type="PANTHER" id="PTHR17224">
    <property type="entry name" value="PEPTIDYL-TRNA HYDROLASE"/>
    <property type="match status" value="1"/>
</dbReference>
<dbReference type="PANTHER" id="PTHR17224:SF1">
    <property type="entry name" value="PEPTIDYL-TRNA HYDROLASE"/>
    <property type="match status" value="1"/>
</dbReference>
<dbReference type="Pfam" id="PF01195">
    <property type="entry name" value="Pept_tRNA_hydro"/>
    <property type="match status" value="1"/>
</dbReference>
<dbReference type="SUPFAM" id="SSF53178">
    <property type="entry name" value="Peptidyl-tRNA hydrolase-like"/>
    <property type="match status" value="1"/>
</dbReference>
<dbReference type="PROSITE" id="PS01195">
    <property type="entry name" value="PEPT_TRNA_HYDROL_1"/>
    <property type="match status" value="1"/>
</dbReference>
<dbReference type="PROSITE" id="PS01196">
    <property type="entry name" value="PEPT_TRNA_HYDROL_2"/>
    <property type="match status" value="1"/>
</dbReference>
<proteinExistence type="evidence at protein level"/>
<reference evidence="6" key="1">
    <citation type="journal article" date="2010" name="J. Bacteriol.">
        <title>Short-term signatures of evolutionary change in the Salmonella enterica serovar typhimurium 14028 genome.</title>
        <authorList>
            <person name="Jarvik T."/>
            <person name="Smillie C."/>
            <person name="Groisman E.A."/>
            <person name="Ochman H."/>
        </authorList>
    </citation>
    <scope>NUCLEOTIDE SEQUENCE [LARGE SCALE GENOMIC DNA]</scope>
    <source>
        <strain>14028s / SGSC 2262</strain>
    </source>
</reference>
<reference key="2">
    <citation type="journal article" date="2016" name="Mol. Cell">
        <title>A Salmonella Toxin Promotes Persister Formation through Acetylation of tRNA.</title>
        <authorList>
            <person name="Cheverton A.M."/>
            <person name="Gollan B."/>
            <person name="Przydacz M."/>
            <person name="Wong C.T."/>
            <person name="Mylona A."/>
            <person name="Hare S.A."/>
            <person name="Helaine S."/>
        </authorList>
    </citation>
    <scope>FUNCTION</scope>
    <scope>CATALYTIC ACTIVITY</scope>
    <source>
        <strain>ATCC 14028 / SGSC 2980 / CDC 6516-60 / NCTC 12023</strain>
    </source>
</reference>
<reference key="3">
    <citation type="journal article" date="2018" name="Nat. Commun.">
        <title>Activity of acetyltransferase toxins involved in Salmonella persister formation during macrophage infection.</title>
        <authorList>
            <person name="Rycroft J.A."/>
            <person name="Gollan B."/>
            <person name="Grabe G.J."/>
            <person name="Hall A."/>
            <person name="Cheverton A.M."/>
            <person name="Larrouy-Maumus G."/>
            <person name="Hare S.A."/>
            <person name="Helaine S."/>
        </authorList>
    </citation>
    <scope>FUNCTION</scope>
    <scope>CATALYTIC ACTIVITY</scope>
    <source>
        <strain>ATCC 14028 / SGSC 2980 / CDC 6516-60 / NCTC 12023</strain>
    </source>
</reference>